<gene>
    <name type="primary">NRT2.3</name>
    <name type="ordered locus">At5g60780</name>
    <name type="ORF">MAE1.3</name>
    <name type="ORF">MAE1.4</name>
</gene>
<proteinExistence type="evidence at protein level"/>
<organism>
    <name type="scientific">Arabidopsis thaliana</name>
    <name type="common">Mouse-ear cress</name>
    <dbReference type="NCBI Taxonomy" id="3702"/>
    <lineage>
        <taxon>Eukaryota</taxon>
        <taxon>Viridiplantae</taxon>
        <taxon>Streptophyta</taxon>
        <taxon>Embryophyta</taxon>
        <taxon>Tracheophyta</taxon>
        <taxon>Spermatophyta</taxon>
        <taxon>Magnoliopsida</taxon>
        <taxon>eudicotyledons</taxon>
        <taxon>Gunneridae</taxon>
        <taxon>Pentapetalae</taxon>
        <taxon>rosids</taxon>
        <taxon>malvids</taxon>
        <taxon>Brassicales</taxon>
        <taxon>Brassicaceae</taxon>
        <taxon>Camelineae</taxon>
        <taxon>Arabidopsis</taxon>
    </lineage>
</organism>
<name>NRT23_ARATH</name>
<sequence length="539" mass="58230">MTHNHSNEEGSIGTSLHGVTAREQVFSFSVDASSQTVQSDDPTAKFALPVDSEHRAKVFNPLSFAKPHMRAFHLGWLSFFTCFISTFAAAPLVPIIRDNLDLTKTDIGNAGVASVSGAIFSRLAMGAVCDLLGARYGTAFSLMLTAPTVFSMSFVGGPSGYLGVRFMIGFCLATFVSCQYWTSVMFNGKIIGLVNGCAGGWGDMGGGVTQLLMPMVFHVIKLAGATPFMAWRIAFFVPGFLQVVMGILVLSLGQDLPDGNLSTLQKSGQVSKDKFSKVFWFAVKNYRTWILFVLYGSSMGIELTINNVISGYFYDRFNLKLQTAGIVAASFGMANFIARPFGGYASDVAARVFGMRGRLWTLWIFQTVGALFCIWLGRASSLPIAILAMMLFSIGTQAACGALFGVAPFVSRRSLGLISGLTGAGGNFGSGLTQLLFFSSARFSTAEGLSLMGVMAVLCTLPVAFIHFPQWGSMFLRPSTDGERSQEEYYYGSEWTENEKQQGLHEGSIKFAENSRSERGRKVALANIPTPENGTPSHV</sequence>
<dbReference type="EMBL" id="DQ447097">
    <property type="protein sequence ID" value="ABE66265.1"/>
    <property type="molecule type" value="mRNA"/>
</dbReference>
<dbReference type="EMBL" id="AB015472">
    <property type="protein sequence ID" value="BAB10099.1"/>
    <property type="molecule type" value="Genomic_DNA"/>
</dbReference>
<dbReference type="EMBL" id="CP002688">
    <property type="protein sequence ID" value="AED97376.1"/>
    <property type="molecule type" value="Genomic_DNA"/>
</dbReference>
<dbReference type="RefSeq" id="NP_200886.1">
    <property type="nucleotide sequence ID" value="NM_125471.2"/>
</dbReference>
<dbReference type="SMR" id="Q9FJH7"/>
<dbReference type="BioGRID" id="21443">
    <property type="interactions" value="4"/>
</dbReference>
<dbReference type="FunCoup" id="Q9FJH7">
    <property type="interactions" value="400"/>
</dbReference>
<dbReference type="IntAct" id="Q9FJH7">
    <property type="interactions" value="4"/>
</dbReference>
<dbReference type="STRING" id="3702.Q9FJH7"/>
<dbReference type="GlyGen" id="Q9FJH7">
    <property type="glycosylation" value="1 site"/>
</dbReference>
<dbReference type="PaxDb" id="3702-AT5G60780.1"/>
<dbReference type="EnsemblPlants" id="AT5G60780.1">
    <property type="protein sequence ID" value="AT5G60780.1"/>
    <property type="gene ID" value="AT5G60780"/>
</dbReference>
<dbReference type="GeneID" id="836199"/>
<dbReference type="Gramene" id="AT5G60780.1">
    <property type="protein sequence ID" value="AT5G60780.1"/>
    <property type="gene ID" value="AT5G60780"/>
</dbReference>
<dbReference type="KEGG" id="ath:AT5G60780"/>
<dbReference type="Araport" id="AT5G60780"/>
<dbReference type="TAIR" id="AT5G60780">
    <property type="gene designation" value="NRT2.3"/>
</dbReference>
<dbReference type="eggNOG" id="ENOG502QPIC">
    <property type="taxonomic scope" value="Eukaryota"/>
</dbReference>
<dbReference type="HOGENOM" id="CLU_024204_0_0_1"/>
<dbReference type="InParanoid" id="Q9FJH7"/>
<dbReference type="OMA" id="DEEHYYG"/>
<dbReference type="OrthoDB" id="434240at2759"/>
<dbReference type="PhylomeDB" id="Q9FJH7"/>
<dbReference type="PRO" id="PR:Q9FJH7"/>
<dbReference type="Proteomes" id="UP000006548">
    <property type="component" value="Chromosome 5"/>
</dbReference>
<dbReference type="ExpressionAtlas" id="Q9FJH7">
    <property type="expression patterns" value="baseline and differential"/>
</dbReference>
<dbReference type="GO" id="GO:0016020">
    <property type="term" value="C:membrane"/>
    <property type="evidence" value="ECO:0007669"/>
    <property type="project" value="UniProtKB-SubCell"/>
</dbReference>
<dbReference type="GO" id="GO:0015112">
    <property type="term" value="F:nitrate transmembrane transporter activity"/>
    <property type="evidence" value="ECO:0007669"/>
    <property type="project" value="InterPro"/>
</dbReference>
<dbReference type="GO" id="GO:0042128">
    <property type="term" value="P:nitrate assimilation"/>
    <property type="evidence" value="ECO:0007669"/>
    <property type="project" value="UniProtKB-KW"/>
</dbReference>
<dbReference type="CDD" id="cd17341">
    <property type="entry name" value="MFS_NRT2_like"/>
    <property type="match status" value="1"/>
</dbReference>
<dbReference type="FunFam" id="1.20.1250.20:FF:000048">
    <property type="entry name" value="High affinity nitrate transporter"/>
    <property type="match status" value="1"/>
</dbReference>
<dbReference type="FunFam" id="1.20.1250.20:FF:000053">
    <property type="entry name" value="Nitrate transporter 2.1"/>
    <property type="match status" value="1"/>
</dbReference>
<dbReference type="Gene3D" id="1.20.1250.20">
    <property type="entry name" value="MFS general substrate transporter like domains"/>
    <property type="match status" value="2"/>
</dbReference>
<dbReference type="InterPro" id="IPR011701">
    <property type="entry name" value="MFS"/>
</dbReference>
<dbReference type="InterPro" id="IPR036259">
    <property type="entry name" value="MFS_trans_sf"/>
</dbReference>
<dbReference type="InterPro" id="IPR044772">
    <property type="entry name" value="NO3_transporter"/>
</dbReference>
<dbReference type="PANTHER" id="PTHR23515">
    <property type="entry name" value="HIGH-AFFINITY NITRATE TRANSPORTER 2.3"/>
    <property type="match status" value="1"/>
</dbReference>
<dbReference type="Pfam" id="PF07690">
    <property type="entry name" value="MFS_1"/>
    <property type="match status" value="1"/>
</dbReference>
<dbReference type="SUPFAM" id="SSF103473">
    <property type="entry name" value="MFS general substrate transporter"/>
    <property type="match status" value="1"/>
</dbReference>
<accession>Q9FJH7</accession>
<comment type="function">
    <text evidence="1">Involved in high-affinity nitrate transport. Acts as a dual component transporter with NTR3.1 (By similarity).</text>
</comment>
<comment type="subunit">
    <text evidence="5">Interacts with NRT3.1.</text>
</comment>
<comment type="subcellular location">
    <subcellularLocation>
        <location evidence="6">Membrane</location>
        <topology evidence="6">Multi-pass membrane protein</topology>
    </subcellularLocation>
</comment>
<comment type="tissue specificity">
    <text evidence="4">Expressed in roots and shoots.</text>
</comment>
<comment type="induction">
    <text evidence="4">Not induced by nitrate.</text>
</comment>
<comment type="similarity">
    <text evidence="6">Belongs to the major facilitator superfamily. Nitrate/nitrite porter (TC 2.A.1.8) family.</text>
</comment>
<protein>
    <recommendedName>
        <fullName>High affinity nitrate transporter 2.3</fullName>
        <shortName>AtNRT2:3</shortName>
    </recommendedName>
</protein>
<feature type="chain" id="PRO_0000400100" description="High affinity nitrate transporter 2.3">
    <location>
        <begin position="1"/>
        <end position="539"/>
    </location>
</feature>
<feature type="transmembrane region" description="Helical" evidence="2">
    <location>
        <begin position="76"/>
        <end position="96"/>
    </location>
</feature>
<feature type="transmembrane region" description="Helical" evidence="2">
    <location>
        <begin position="112"/>
        <end position="132"/>
    </location>
</feature>
<feature type="transmembrane region" description="Helical" evidence="2">
    <location>
        <begin position="137"/>
        <end position="157"/>
    </location>
</feature>
<feature type="transmembrane region" description="Helical" evidence="2">
    <location>
        <begin position="166"/>
        <end position="186"/>
    </location>
</feature>
<feature type="transmembrane region" description="Helical" evidence="2">
    <location>
        <begin position="190"/>
        <end position="210"/>
    </location>
</feature>
<feature type="transmembrane region" description="Helical" evidence="2">
    <location>
        <begin position="233"/>
        <end position="253"/>
    </location>
</feature>
<feature type="transmembrane region" description="Helical" evidence="2">
    <location>
        <begin position="289"/>
        <end position="309"/>
    </location>
</feature>
<feature type="transmembrane region" description="Helical" evidence="2">
    <location>
        <begin position="324"/>
        <end position="344"/>
    </location>
</feature>
<feature type="transmembrane region" description="Helical" evidence="2">
    <location>
        <begin position="359"/>
        <end position="379"/>
    </location>
</feature>
<feature type="transmembrane region" description="Helical" evidence="2">
    <location>
        <begin position="384"/>
        <end position="404"/>
    </location>
</feature>
<feature type="transmembrane region" description="Helical" evidence="2">
    <location>
        <begin position="418"/>
        <end position="438"/>
    </location>
</feature>
<feature type="transmembrane region" description="Helical" evidence="2">
    <location>
        <begin position="448"/>
        <end position="468"/>
    </location>
</feature>
<feature type="region of interest" description="Disordered" evidence="3">
    <location>
        <begin position="501"/>
        <end position="539"/>
    </location>
</feature>
<feature type="compositionally biased region" description="Polar residues" evidence="3">
    <location>
        <begin position="530"/>
        <end position="539"/>
    </location>
</feature>
<reference key="1">
    <citation type="journal article" date="2006" name="Plant Biotechnol. J.">
        <title>Simultaneous high-throughput recombinational cloning of open reading frames in closed and open configurations.</title>
        <authorList>
            <person name="Underwood B.A."/>
            <person name="Vanderhaeghen R."/>
            <person name="Whitford R."/>
            <person name="Town C.D."/>
            <person name="Hilson P."/>
        </authorList>
    </citation>
    <scope>NUCLEOTIDE SEQUENCE [LARGE SCALE MRNA]</scope>
    <source>
        <strain>cv. Columbia</strain>
    </source>
</reference>
<reference key="2">
    <citation type="journal article" date="1998" name="DNA Res.">
        <title>Structural analysis of Arabidopsis thaliana chromosome 5. VII. Sequence features of the regions of 1,013,767 bp covered by sixteen physically assigned P1 and TAC clones.</title>
        <authorList>
            <person name="Nakamura Y."/>
            <person name="Sato S."/>
            <person name="Asamizu E."/>
            <person name="Kaneko T."/>
            <person name="Kotani H."/>
            <person name="Miyajima N."/>
            <person name="Tabata S."/>
        </authorList>
    </citation>
    <scope>NUCLEOTIDE SEQUENCE [LARGE SCALE GENOMIC DNA]</scope>
    <source>
        <strain>cv. Columbia</strain>
    </source>
</reference>
<reference key="3">
    <citation type="journal article" date="2017" name="Plant J.">
        <title>Araport11: a complete reannotation of the Arabidopsis thaliana reference genome.</title>
        <authorList>
            <person name="Cheng C.Y."/>
            <person name="Krishnakumar V."/>
            <person name="Chan A.P."/>
            <person name="Thibaud-Nissen F."/>
            <person name="Schobel S."/>
            <person name="Town C.D."/>
        </authorList>
    </citation>
    <scope>GENOME REANNOTATION</scope>
    <source>
        <strain>cv. Columbia</strain>
    </source>
</reference>
<reference key="4">
    <citation type="journal article" date="2002" name="J. Exp. Bot.">
        <title>Nitrate transport in plants: which gene and which control?</title>
        <authorList>
            <person name="Orsel M."/>
            <person name="Filleur S."/>
            <person name="Fraisier V."/>
            <person name="Daniel-Vedele F."/>
        </authorList>
    </citation>
    <scope>GENE FAMILY</scope>
</reference>
<reference key="5">
    <citation type="journal article" date="2003" name="Plant Cell Physiol.">
        <title>Regulation of NRT1 and NRT2 gene families of Arabidopsis thaliana: responses to nitrate provision.</title>
        <authorList>
            <person name="Okamoto M."/>
            <person name="Vidmar J.J."/>
            <person name="Glass A.D."/>
        </authorList>
    </citation>
    <scope>TISSUE SPECIFICITY</scope>
    <scope>INDUCTION BY NITRATE</scope>
    <scope>GENE FAMILY</scope>
</reference>
<reference key="6">
    <citation type="journal article" date="2006" name="Plant Physiol.">
        <title>Characterization of a two-component high-affinity nitrate uptake system in Arabidopsis. Physiology and protein-protein interaction.</title>
        <authorList>
            <person name="Orsel M."/>
            <person name="Chopin F."/>
            <person name="Leleu O."/>
            <person name="Smith S.J."/>
            <person name="Krapp A."/>
            <person name="Daniel-Vedele F."/>
            <person name="Miller A.J."/>
        </authorList>
    </citation>
    <scope>INTERACTION WITH NRT3.1</scope>
</reference>
<reference key="7">
    <citation type="journal article" date="2007" name="FEBS Lett.">
        <title>Nitrate transporters and peptide transporters.</title>
        <authorList>
            <person name="Tsay Y.F."/>
            <person name="Chiu C.C."/>
            <person name="Tsai C.B."/>
            <person name="Ho C.H."/>
            <person name="Hsu P.K."/>
        </authorList>
    </citation>
    <scope>GENE FAMILY</scope>
</reference>
<evidence type="ECO:0000250" key="1"/>
<evidence type="ECO:0000255" key="2"/>
<evidence type="ECO:0000256" key="3">
    <source>
        <dbReference type="SAM" id="MobiDB-lite"/>
    </source>
</evidence>
<evidence type="ECO:0000269" key="4">
    <source>
    </source>
</evidence>
<evidence type="ECO:0000269" key="5">
    <source>
    </source>
</evidence>
<evidence type="ECO:0000305" key="6"/>
<keyword id="KW-0472">Membrane</keyword>
<keyword id="KW-0534">Nitrate assimilation</keyword>
<keyword id="KW-1185">Reference proteome</keyword>
<keyword id="KW-0812">Transmembrane</keyword>
<keyword id="KW-1133">Transmembrane helix</keyword>